<reference key="1">
    <citation type="journal article" date="2005" name="Nature">
        <title>Sequencing of Aspergillus nidulans and comparative analysis with A. fumigatus and A. oryzae.</title>
        <authorList>
            <person name="Galagan J.E."/>
            <person name="Calvo S.E."/>
            <person name="Cuomo C."/>
            <person name="Ma L.-J."/>
            <person name="Wortman J.R."/>
            <person name="Batzoglou S."/>
            <person name="Lee S.-I."/>
            <person name="Bastuerkmen M."/>
            <person name="Spevak C.C."/>
            <person name="Clutterbuck J."/>
            <person name="Kapitonov V."/>
            <person name="Jurka J."/>
            <person name="Scazzocchio C."/>
            <person name="Farman M.L."/>
            <person name="Butler J."/>
            <person name="Purcell S."/>
            <person name="Harris S."/>
            <person name="Braus G.H."/>
            <person name="Draht O."/>
            <person name="Busch S."/>
            <person name="D'Enfert C."/>
            <person name="Bouchier C."/>
            <person name="Goldman G.H."/>
            <person name="Bell-Pedersen D."/>
            <person name="Griffiths-Jones S."/>
            <person name="Doonan J.H."/>
            <person name="Yu J."/>
            <person name="Vienken K."/>
            <person name="Pain A."/>
            <person name="Freitag M."/>
            <person name="Selker E.U."/>
            <person name="Archer D.B."/>
            <person name="Penalva M.A."/>
            <person name="Oakley B.R."/>
            <person name="Momany M."/>
            <person name="Tanaka T."/>
            <person name="Kumagai T."/>
            <person name="Asai K."/>
            <person name="Machida M."/>
            <person name="Nierman W.C."/>
            <person name="Denning D.W."/>
            <person name="Caddick M.X."/>
            <person name="Hynes M."/>
            <person name="Paoletti M."/>
            <person name="Fischer R."/>
            <person name="Miller B.L."/>
            <person name="Dyer P.S."/>
            <person name="Sachs M.S."/>
            <person name="Osmani S.A."/>
            <person name="Birren B.W."/>
        </authorList>
    </citation>
    <scope>NUCLEOTIDE SEQUENCE [LARGE SCALE GENOMIC DNA]</scope>
    <source>
        <strain>FGSC A4 / ATCC 38163 / CBS 112.46 / NRRL 194 / M139</strain>
    </source>
</reference>
<reference key="2">
    <citation type="journal article" date="2009" name="Fungal Genet. Biol.">
        <title>The 2008 update of the Aspergillus nidulans genome annotation: a community effort.</title>
        <authorList>
            <person name="Wortman J.R."/>
            <person name="Gilsenan J.M."/>
            <person name="Joardar V."/>
            <person name="Deegan J."/>
            <person name="Clutterbuck J."/>
            <person name="Andersen M.R."/>
            <person name="Archer D."/>
            <person name="Bencina M."/>
            <person name="Braus G."/>
            <person name="Coutinho P."/>
            <person name="von Dohren H."/>
            <person name="Doonan J."/>
            <person name="Driessen A.J."/>
            <person name="Durek P."/>
            <person name="Espeso E."/>
            <person name="Fekete E."/>
            <person name="Flipphi M."/>
            <person name="Estrada C.G."/>
            <person name="Geysens S."/>
            <person name="Goldman G."/>
            <person name="de Groot P.W."/>
            <person name="Hansen K."/>
            <person name="Harris S.D."/>
            <person name="Heinekamp T."/>
            <person name="Helmstaedt K."/>
            <person name="Henrissat B."/>
            <person name="Hofmann G."/>
            <person name="Homan T."/>
            <person name="Horio T."/>
            <person name="Horiuchi H."/>
            <person name="James S."/>
            <person name="Jones M."/>
            <person name="Karaffa L."/>
            <person name="Karanyi Z."/>
            <person name="Kato M."/>
            <person name="Keller N."/>
            <person name="Kelly D.E."/>
            <person name="Kiel J.A."/>
            <person name="Kim J.M."/>
            <person name="van der Klei I.J."/>
            <person name="Klis F.M."/>
            <person name="Kovalchuk A."/>
            <person name="Krasevec N."/>
            <person name="Kubicek C.P."/>
            <person name="Liu B."/>
            <person name="Maccabe A."/>
            <person name="Meyer V."/>
            <person name="Mirabito P."/>
            <person name="Miskei M."/>
            <person name="Mos M."/>
            <person name="Mullins J."/>
            <person name="Nelson D.R."/>
            <person name="Nielsen J."/>
            <person name="Oakley B.R."/>
            <person name="Osmani S.A."/>
            <person name="Pakula T."/>
            <person name="Paszewski A."/>
            <person name="Paulsen I."/>
            <person name="Pilsyk S."/>
            <person name="Pocsi I."/>
            <person name="Punt P.J."/>
            <person name="Ram A.F."/>
            <person name="Ren Q."/>
            <person name="Robellet X."/>
            <person name="Robson G."/>
            <person name="Seiboth B."/>
            <person name="van Solingen P."/>
            <person name="Specht T."/>
            <person name="Sun J."/>
            <person name="Taheri-Talesh N."/>
            <person name="Takeshita N."/>
            <person name="Ussery D."/>
            <person name="vanKuyk P.A."/>
            <person name="Visser H."/>
            <person name="van de Vondervoort P.J."/>
            <person name="de Vries R.P."/>
            <person name="Walton J."/>
            <person name="Xiang X."/>
            <person name="Xiong Y."/>
            <person name="Zeng A.P."/>
            <person name="Brandt B.W."/>
            <person name="Cornell M.J."/>
            <person name="van den Hondel C.A."/>
            <person name="Visser J."/>
            <person name="Oliver S.G."/>
            <person name="Turner G."/>
        </authorList>
    </citation>
    <scope>GENOME REANNOTATION</scope>
    <source>
        <strain>FGSC A4 / ATCC 38163 / CBS 112.46 / NRRL 194 / M139</strain>
    </source>
</reference>
<evidence type="ECO:0000250" key="1"/>
<evidence type="ECO:0000250" key="2">
    <source>
        <dbReference type="UniProtKB" id="P94522"/>
    </source>
</evidence>
<evidence type="ECO:0000255" key="3"/>
<evidence type="ECO:0000305" key="4"/>
<accession>Q5BA96</accession>
<accession>C8VPL6</accession>
<sequence>MYLPTLAASASLLVGVAHGYASPGACSGACNIHDPALIRRESDGKYFRFSTGNKISYASASSIEGPWTAIGSVLPGGSSIDLDGNDDLWAPDVQLVNGVYYVLYSVSTFGSQNSAIGLATSDTMDLNTWTDHGSTGIRSDSSKPYNAIDGNLFQDDSGTWYMNFGSFWNDIYQAQMKSPPTAVASSSYQIAYQPAGEHAVEGAYLYKYGNYYYLFFSEGKCCGYDSSRPATGEEYKIKVCRSTTATGNFVDANGVSCTSGGGTIVLESHDNVYGPGGQGVFTDPTLGPVLYYHYVDTTIGYADSQKLFGWNVLDFSSGWPVV</sequence>
<dbReference type="EC" id="3.2.1.99"/>
<dbReference type="EMBL" id="AACD01000043">
    <property type="protein sequence ID" value="EAA64639.1"/>
    <property type="status" value="ALT_SEQ"/>
    <property type="molecule type" value="Genomic_DNA"/>
</dbReference>
<dbReference type="EMBL" id="BN001307">
    <property type="protein sequence ID" value="CBF87045.1"/>
    <property type="status" value="ALT_SEQ"/>
    <property type="molecule type" value="Genomic_DNA"/>
</dbReference>
<dbReference type="RefSeq" id="XP_660138.1">
    <property type="nucleotide sequence ID" value="XM_655046.1"/>
</dbReference>
<dbReference type="SMR" id="Q5BA96"/>
<dbReference type="STRING" id="227321.Q5BA96"/>
<dbReference type="CAZy" id="GH43">
    <property type="family name" value="Glycoside Hydrolase Family 43"/>
</dbReference>
<dbReference type="KEGG" id="ani:ANIA_02534"/>
<dbReference type="VEuPathDB" id="FungiDB:AN2534"/>
<dbReference type="eggNOG" id="ENOG502QTQG">
    <property type="taxonomic scope" value="Eukaryota"/>
</dbReference>
<dbReference type="HOGENOM" id="CLU_009397_5_0_1"/>
<dbReference type="InParanoid" id="Q5BA96"/>
<dbReference type="OrthoDB" id="195678at2759"/>
<dbReference type="UniPathway" id="UPA00667"/>
<dbReference type="Proteomes" id="UP000000560">
    <property type="component" value="Chromosome VII"/>
</dbReference>
<dbReference type="GO" id="GO:0005576">
    <property type="term" value="C:extracellular region"/>
    <property type="evidence" value="ECO:0007669"/>
    <property type="project" value="UniProtKB-SubCell"/>
</dbReference>
<dbReference type="GO" id="GO:0046558">
    <property type="term" value="F:arabinan endo-1,5-alpha-L-arabinosidase activity"/>
    <property type="evidence" value="ECO:0007669"/>
    <property type="project" value="UniProtKB-EC"/>
</dbReference>
<dbReference type="GO" id="GO:0031222">
    <property type="term" value="P:arabinan catabolic process"/>
    <property type="evidence" value="ECO:0007669"/>
    <property type="project" value="UniProtKB-UniPathway"/>
</dbReference>
<dbReference type="GO" id="GO:0045493">
    <property type="term" value="P:xylan catabolic process"/>
    <property type="evidence" value="ECO:0007669"/>
    <property type="project" value="UniProtKB-KW"/>
</dbReference>
<dbReference type="CDD" id="cd18831">
    <property type="entry name" value="GH43_AnAbnA-like"/>
    <property type="match status" value="1"/>
</dbReference>
<dbReference type="FunFam" id="2.115.10.20:FF:000005">
    <property type="entry name" value="Arabinan endo-1,5-alpha-L-arabinosidase"/>
    <property type="match status" value="1"/>
</dbReference>
<dbReference type="Gene3D" id="2.115.10.20">
    <property type="entry name" value="Glycosyl hydrolase domain, family 43"/>
    <property type="match status" value="1"/>
</dbReference>
<dbReference type="InterPro" id="IPR050727">
    <property type="entry name" value="GH43_arabinanases"/>
</dbReference>
<dbReference type="InterPro" id="IPR006710">
    <property type="entry name" value="Glyco_hydro_43"/>
</dbReference>
<dbReference type="InterPro" id="IPR016840">
    <property type="entry name" value="Glyco_hydro_43_endo_a_Ara-ase"/>
</dbReference>
<dbReference type="InterPro" id="IPR023296">
    <property type="entry name" value="Glyco_hydro_beta-prop_sf"/>
</dbReference>
<dbReference type="PANTHER" id="PTHR43301">
    <property type="entry name" value="ARABINAN ENDO-1,5-ALPHA-L-ARABINOSIDASE"/>
    <property type="match status" value="1"/>
</dbReference>
<dbReference type="PANTHER" id="PTHR43301:SF3">
    <property type="entry name" value="ARABINAN ENDO-1,5-ALPHA-L-ARABINOSIDASE A-RELATED"/>
    <property type="match status" value="1"/>
</dbReference>
<dbReference type="Pfam" id="PF04616">
    <property type="entry name" value="Glyco_hydro_43"/>
    <property type="match status" value="1"/>
</dbReference>
<dbReference type="PIRSF" id="PIRSF026534">
    <property type="entry name" value="Endo_alpha-L-arabinosidase"/>
    <property type="match status" value="1"/>
</dbReference>
<dbReference type="SUPFAM" id="SSF75005">
    <property type="entry name" value="Arabinanase/levansucrase/invertase"/>
    <property type="match status" value="1"/>
</dbReference>
<organism>
    <name type="scientific">Emericella nidulans (strain FGSC A4 / ATCC 38163 / CBS 112.46 / NRRL 194 / M139)</name>
    <name type="common">Aspergillus nidulans</name>
    <dbReference type="NCBI Taxonomy" id="227321"/>
    <lineage>
        <taxon>Eukaryota</taxon>
        <taxon>Fungi</taxon>
        <taxon>Dikarya</taxon>
        <taxon>Ascomycota</taxon>
        <taxon>Pezizomycotina</taxon>
        <taxon>Eurotiomycetes</taxon>
        <taxon>Eurotiomycetidae</taxon>
        <taxon>Eurotiales</taxon>
        <taxon>Aspergillaceae</taxon>
        <taxon>Aspergillus</taxon>
        <taxon>Aspergillus subgen. Nidulantes</taxon>
    </lineage>
</organism>
<name>ABNA_EMENI</name>
<comment type="function">
    <text evidence="1">Endo-1,5-alpha-L-arabinanase involved in degradation of pectin. Its preferred substrate is linear 1,5-alpha-L-arabinan (By similarity).</text>
</comment>
<comment type="catalytic activity">
    <reaction>
        <text>Endohydrolysis of (1-&gt;5)-alpha-arabinofuranosidic linkages in (1-&gt;5)-arabinans.</text>
        <dbReference type="EC" id="3.2.1.99"/>
    </reaction>
</comment>
<comment type="pathway">
    <text>Glycan metabolism; L-arabinan degradation.</text>
</comment>
<comment type="subcellular location">
    <subcellularLocation>
        <location evidence="1">Secreted</location>
    </subcellularLocation>
</comment>
<comment type="similarity">
    <text evidence="4">Belongs to the glycosyl hydrolase 43 family.</text>
</comment>
<comment type="sequence caution" evidence="4">
    <conflict type="erroneous gene model prediction">
        <sequence resource="EMBL-CDS" id="CBF87045"/>
    </conflict>
</comment>
<comment type="sequence caution" evidence="4">
    <conflict type="erroneous gene model prediction">
        <sequence resource="EMBL-CDS" id="EAA64639"/>
    </conflict>
</comment>
<keyword id="KW-0119">Carbohydrate metabolism</keyword>
<keyword id="KW-0326">Glycosidase</keyword>
<keyword id="KW-0378">Hydrolase</keyword>
<keyword id="KW-0624">Polysaccharide degradation</keyword>
<keyword id="KW-1185">Reference proteome</keyword>
<keyword id="KW-0964">Secreted</keyword>
<keyword id="KW-0732">Signal</keyword>
<keyword id="KW-0858">Xylan degradation</keyword>
<protein>
    <recommendedName>
        <fullName>Probable arabinan endo-1,5-alpha-L-arabinosidase A</fullName>
        <ecNumber>3.2.1.99</ecNumber>
    </recommendedName>
    <alternativeName>
        <fullName>Endo-1,5-alpha-L-arabinanase A</fullName>
        <shortName>ABN A</shortName>
    </alternativeName>
</protein>
<gene>
    <name type="primary">abnA</name>
    <name type="ORF">AN2534</name>
</gene>
<feature type="signal peptide" evidence="3">
    <location>
        <begin position="1"/>
        <end position="19"/>
    </location>
</feature>
<feature type="chain" id="PRO_0000394623" description="Probable arabinan endo-1,5-alpha-L-arabinosidase A">
    <location>
        <begin position="20"/>
        <end position="322"/>
    </location>
</feature>
<feature type="active site" description="Proton acceptor" evidence="2">
    <location>
        <position position="34"/>
    </location>
</feature>
<feature type="active site" description="Proton donor" evidence="2">
    <location>
        <position position="201"/>
    </location>
</feature>
<feature type="site" description="Important for catalytic activity, responsible for pKa modulation of the active site Glu and correct orientation of both the proton donor and substrate" evidence="2">
    <location>
        <position position="149"/>
    </location>
</feature>
<proteinExistence type="inferred from homology"/>